<gene>
    <name evidence="6" type="primary">lonp-1</name>
    <name evidence="6" type="ORF">C34B2.6</name>
</gene>
<sequence>MYRAGAVLLRGATRTRLLAAASAHQSFATFSQRNQSILMMKSMELAGNSGERRFYSTHDDPIAVDDSLELYKDLGGMSPIQVPADMPNVPMLAINRYPLFPGFIKKVDIVKDDNLKALIRRQLSLKQPYAGVFVKRDDENKEETITSLSEVYPTGSFVQIIEVRDQGSVLELVLSAHRRIRALEPIDEITPKNETPLNGRRARGKRAASATSPLTPPPSPPPLAPSVASVAPEISATEEKEEKTTPPSATGEKQKKGIIMVRTENVVAEPVPKNNETKATMMAIVQTIRDVVQFNQLFGQQINLLLHPSQNVIDNPVYLCDLVATLVQSAETKDLQEMMDEIDVSKRLKIALLLIQKEKAVAKLKYDINKDVEKKVQDHHRKYLLNEQLKVIKKELGIEKDEKTTIIEKIDERIKTLAVPEYALKVINEEKTKLQFLDPHSSEFSVTRNYLEWLTSVPWGLTSPENRRLSVAKKALDEGHYGMKDVKERIMEFIAVNLLRKSIGGKILCFHGPPGVGKTSIAKSIATALNREYFRFSVGGMTDVAEIKGHRRTYVGAMPGKMIQCMKKVKTENPLVLIDEVDKIGGAGFHGDPASALLELLDPEQNANFNDHFLDVPVDLSRVLFICTANEISKIPGPLRDRMEMIDVSGYLAEEKVEIAHQHLIPQLRKDTSLATEQLKIEDSALEELIKHYCRESGVRNLQQHIERIFRKAALQIAEQQNEDEEPAEKATTAITENSEAEPITSTSSADCLKSSAEQIVVCTENLQKFVGRPKFTSDRMYEVTPPGVIMGLAWTAMGGSALYIETVLKRPVDLTNDKDGSIETTGNLGDVMKESVRTALTVAKGILAREQPDNKFFDKAHIHIHVPEGATPKDGPSAGVTLVSSLLSLALDRPVVQDMAMTGEISLTGKVLPVGGIREKVIAARRVGAKRVFLPNENRRDFDDLPEFMKSELDIRFVSHYDELYEHLFQ</sequence>
<feature type="transit peptide" description="Mitochondrion" evidence="1">
    <location>
        <begin position="1"/>
        <end position="55"/>
    </location>
</feature>
<feature type="chain" id="PRO_0000026735" description="Lon protease homolog, mitochondrial">
    <location>
        <begin position="56"/>
        <end position="971"/>
    </location>
</feature>
<feature type="domain" description="Lon N-terminal" evidence="3">
    <location>
        <begin position="89"/>
        <end position="359"/>
    </location>
</feature>
<feature type="domain" description="Lon proteolytic" evidence="2">
    <location>
        <begin position="784"/>
        <end position="971"/>
    </location>
</feature>
<feature type="region of interest" description="Disordered" evidence="4">
    <location>
        <begin position="190"/>
        <end position="255"/>
    </location>
</feature>
<feature type="region of interest" description="Disordered" evidence="4">
    <location>
        <begin position="718"/>
        <end position="749"/>
    </location>
</feature>
<feature type="compositionally biased region" description="Pro residues" evidence="4">
    <location>
        <begin position="214"/>
        <end position="224"/>
    </location>
</feature>
<feature type="compositionally biased region" description="Polar residues" evidence="4">
    <location>
        <begin position="733"/>
        <end position="749"/>
    </location>
</feature>
<feature type="active site" evidence="1">
    <location>
        <position position="878"/>
    </location>
</feature>
<feature type="active site" evidence="1">
    <location>
        <position position="921"/>
    </location>
</feature>
<feature type="binding site" evidence="1">
    <location>
        <begin position="512"/>
        <end position="519"/>
    </location>
    <ligand>
        <name>ATP</name>
        <dbReference type="ChEBI" id="CHEBI:30616"/>
    </ligand>
</feature>
<organism>
    <name type="scientific">Caenorhabditis elegans</name>
    <dbReference type="NCBI Taxonomy" id="6239"/>
    <lineage>
        <taxon>Eukaryota</taxon>
        <taxon>Metazoa</taxon>
        <taxon>Ecdysozoa</taxon>
        <taxon>Nematoda</taxon>
        <taxon>Chromadorea</taxon>
        <taxon>Rhabditida</taxon>
        <taxon>Rhabditina</taxon>
        <taxon>Rhabditomorpha</taxon>
        <taxon>Rhabditoidea</taxon>
        <taxon>Rhabditidae</taxon>
        <taxon>Peloderinae</taxon>
        <taxon>Caenorhabditis</taxon>
    </lineage>
</organism>
<reference key="1">
    <citation type="journal article" date="1998" name="Science">
        <title>Genome sequence of the nematode C. elegans: a platform for investigating biology.</title>
        <authorList>
            <consortium name="The C. elegans sequencing consortium"/>
        </authorList>
    </citation>
    <scope>NUCLEOTIDE SEQUENCE [LARGE SCALE GENOMIC DNA]</scope>
    <source>
        <strain>Bristol N2</strain>
    </source>
</reference>
<reference key="2">
    <citation type="journal article" date="2012" name="Science">
        <title>Mitochondrial import efficiency of ATFS-1 regulates mitochondrial UPR activation.</title>
        <authorList>
            <person name="Nargund A.M."/>
            <person name="Pellegrino M.W."/>
            <person name="Fiorese C.J."/>
            <person name="Baker B.M."/>
            <person name="Haynes C.M."/>
        </authorList>
    </citation>
    <scope>FUNCTION</scope>
    <scope>DISRUPTION PHENOTYPE</scope>
</reference>
<name>LONM_CAEEL</name>
<proteinExistence type="inferred from homology"/>
<dbReference type="EC" id="3.4.21.53" evidence="1"/>
<dbReference type="EMBL" id="FO080220">
    <property type="protein sequence ID" value="CCD62124.1"/>
    <property type="molecule type" value="Genomic_DNA"/>
</dbReference>
<dbReference type="PIR" id="T32883">
    <property type="entry name" value="T32883"/>
</dbReference>
<dbReference type="RefSeq" id="NP_492796.1">
    <property type="nucleotide sequence ID" value="NM_060395.8"/>
</dbReference>
<dbReference type="SMR" id="O44952"/>
<dbReference type="BioGRID" id="38377">
    <property type="interactions" value="26"/>
</dbReference>
<dbReference type="FunCoup" id="O44952">
    <property type="interactions" value="1777"/>
</dbReference>
<dbReference type="IntAct" id="O44952">
    <property type="interactions" value="1"/>
</dbReference>
<dbReference type="STRING" id="6239.C34B2.6.1"/>
<dbReference type="PaxDb" id="6239-C34B2.6"/>
<dbReference type="PeptideAtlas" id="O44952"/>
<dbReference type="EnsemblMetazoa" id="C34B2.6.1">
    <property type="protein sequence ID" value="C34B2.6.1"/>
    <property type="gene ID" value="WBGene00016391"/>
</dbReference>
<dbReference type="GeneID" id="172966"/>
<dbReference type="KEGG" id="cel:CELE_C34B2.6"/>
<dbReference type="UCSC" id="C34B2.6">
    <property type="organism name" value="c. elegans"/>
</dbReference>
<dbReference type="AGR" id="WB:WBGene00016391"/>
<dbReference type="CTD" id="172966"/>
<dbReference type="WormBase" id="C34B2.6">
    <property type="protein sequence ID" value="CE16894"/>
    <property type="gene ID" value="WBGene00016391"/>
    <property type="gene designation" value="lonp-1"/>
</dbReference>
<dbReference type="eggNOG" id="KOG2004">
    <property type="taxonomic scope" value="Eukaryota"/>
</dbReference>
<dbReference type="GeneTree" id="ENSGT00530000063553"/>
<dbReference type="HOGENOM" id="CLU_004109_1_0_1"/>
<dbReference type="InParanoid" id="O44952"/>
<dbReference type="OMA" id="WLTNIPW"/>
<dbReference type="OrthoDB" id="2411602at2759"/>
<dbReference type="PhylomeDB" id="O44952"/>
<dbReference type="Reactome" id="R-CEL-9837999">
    <property type="pathway name" value="Mitochondrial protein degradation"/>
</dbReference>
<dbReference type="PRO" id="PR:O44952"/>
<dbReference type="Proteomes" id="UP000001940">
    <property type="component" value="Chromosome I"/>
</dbReference>
<dbReference type="Bgee" id="WBGene00016391">
    <property type="expression patterns" value="Expressed in germ line (C elegans) and 4 other cell types or tissues"/>
</dbReference>
<dbReference type="GO" id="GO:0005759">
    <property type="term" value="C:mitochondrial matrix"/>
    <property type="evidence" value="ECO:0000318"/>
    <property type="project" value="GO_Central"/>
</dbReference>
<dbReference type="GO" id="GO:0005524">
    <property type="term" value="F:ATP binding"/>
    <property type="evidence" value="ECO:0007669"/>
    <property type="project" value="UniProtKB-UniRule"/>
</dbReference>
<dbReference type="GO" id="GO:0016887">
    <property type="term" value="F:ATP hydrolysis activity"/>
    <property type="evidence" value="ECO:0007669"/>
    <property type="project" value="UniProtKB-UniRule"/>
</dbReference>
<dbReference type="GO" id="GO:0004176">
    <property type="term" value="F:ATP-dependent peptidase activity"/>
    <property type="evidence" value="ECO:0000318"/>
    <property type="project" value="GO_Central"/>
</dbReference>
<dbReference type="GO" id="GO:0043565">
    <property type="term" value="F:sequence-specific DNA binding"/>
    <property type="evidence" value="ECO:0007669"/>
    <property type="project" value="UniProtKB-UniRule"/>
</dbReference>
<dbReference type="GO" id="GO:0004252">
    <property type="term" value="F:serine-type endopeptidase activity"/>
    <property type="evidence" value="ECO:0007669"/>
    <property type="project" value="UniProtKB-UniRule"/>
</dbReference>
<dbReference type="GO" id="GO:0003697">
    <property type="term" value="F:single-stranded DNA binding"/>
    <property type="evidence" value="ECO:0000318"/>
    <property type="project" value="GO_Central"/>
</dbReference>
<dbReference type="GO" id="GO:0034599">
    <property type="term" value="P:cellular response to oxidative stress"/>
    <property type="evidence" value="ECO:0007669"/>
    <property type="project" value="UniProtKB-UniRule"/>
</dbReference>
<dbReference type="GO" id="GO:0051131">
    <property type="term" value="P:chaperone-mediated protein complex assembly"/>
    <property type="evidence" value="ECO:0000318"/>
    <property type="project" value="GO_Central"/>
</dbReference>
<dbReference type="GO" id="GO:0036498">
    <property type="term" value="P:IRE1-mediated unfolded protein response"/>
    <property type="evidence" value="ECO:0007007"/>
    <property type="project" value="WormBase"/>
</dbReference>
<dbReference type="GO" id="GO:0007005">
    <property type="term" value="P:mitochondrion organization"/>
    <property type="evidence" value="ECO:0000318"/>
    <property type="project" value="GO_Central"/>
</dbReference>
<dbReference type="GO" id="GO:0070407">
    <property type="term" value="P:oxidation-dependent protein catabolic process"/>
    <property type="evidence" value="ECO:0007669"/>
    <property type="project" value="UniProtKB-UniRule"/>
</dbReference>
<dbReference type="GO" id="GO:0030163">
    <property type="term" value="P:protein catabolic process"/>
    <property type="evidence" value="ECO:0000315"/>
    <property type="project" value="UniProtKB"/>
</dbReference>
<dbReference type="GO" id="GO:0006515">
    <property type="term" value="P:protein quality control for misfolded or incompletely synthesized proteins"/>
    <property type="evidence" value="ECO:0000318"/>
    <property type="project" value="GO_Central"/>
</dbReference>
<dbReference type="CDD" id="cd19500">
    <property type="entry name" value="RecA-like_Lon"/>
    <property type="match status" value="1"/>
</dbReference>
<dbReference type="FunFam" id="3.40.50.300:FF:000021">
    <property type="entry name" value="Lon protease homolog"/>
    <property type="match status" value="1"/>
</dbReference>
<dbReference type="FunFam" id="1.20.5.5270:FF:000001">
    <property type="entry name" value="Lon protease homolog, mitochondrial"/>
    <property type="match status" value="1"/>
</dbReference>
<dbReference type="FunFam" id="1.20.58.1480:FF:000002">
    <property type="entry name" value="Lon protease homolog, mitochondrial"/>
    <property type="match status" value="1"/>
</dbReference>
<dbReference type="FunFam" id="2.30.130.40:FF:000021">
    <property type="entry name" value="Lon protease homolog, mitochondrial"/>
    <property type="match status" value="1"/>
</dbReference>
<dbReference type="FunFam" id="3.30.230.10:FF:000015">
    <property type="entry name" value="Lon protease homolog, mitochondrial"/>
    <property type="match status" value="1"/>
</dbReference>
<dbReference type="Gene3D" id="1.10.8.60">
    <property type="match status" value="1"/>
</dbReference>
<dbReference type="Gene3D" id="1.20.5.5270">
    <property type="match status" value="1"/>
</dbReference>
<dbReference type="Gene3D" id="1.20.58.1480">
    <property type="match status" value="1"/>
</dbReference>
<dbReference type="Gene3D" id="3.30.230.10">
    <property type="match status" value="1"/>
</dbReference>
<dbReference type="Gene3D" id="2.30.130.40">
    <property type="entry name" value="LON domain-like"/>
    <property type="match status" value="1"/>
</dbReference>
<dbReference type="Gene3D" id="3.40.50.300">
    <property type="entry name" value="P-loop containing nucleotide triphosphate hydrolases"/>
    <property type="match status" value="1"/>
</dbReference>
<dbReference type="HAMAP" id="MF_03120">
    <property type="entry name" value="lonm_euk"/>
    <property type="match status" value="1"/>
</dbReference>
<dbReference type="InterPro" id="IPR003593">
    <property type="entry name" value="AAA+_ATPase"/>
</dbReference>
<dbReference type="InterPro" id="IPR003959">
    <property type="entry name" value="ATPase_AAA_core"/>
</dbReference>
<dbReference type="InterPro" id="IPR004815">
    <property type="entry name" value="Lon_bac/euk-typ"/>
</dbReference>
<dbReference type="InterPro" id="IPR054594">
    <property type="entry name" value="Lon_lid"/>
</dbReference>
<dbReference type="InterPro" id="IPR008269">
    <property type="entry name" value="Lon_proteolytic"/>
</dbReference>
<dbReference type="InterPro" id="IPR027065">
    <property type="entry name" value="Lon_Prtase"/>
</dbReference>
<dbReference type="InterPro" id="IPR003111">
    <property type="entry name" value="Lon_prtase_N"/>
</dbReference>
<dbReference type="InterPro" id="IPR046336">
    <property type="entry name" value="Lon_prtase_N_sf"/>
</dbReference>
<dbReference type="InterPro" id="IPR027503">
    <property type="entry name" value="Lonm_euk"/>
</dbReference>
<dbReference type="InterPro" id="IPR027417">
    <property type="entry name" value="P-loop_NTPase"/>
</dbReference>
<dbReference type="InterPro" id="IPR008268">
    <property type="entry name" value="Peptidase_S16_AS"/>
</dbReference>
<dbReference type="InterPro" id="IPR015947">
    <property type="entry name" value="PUA-like_sf"/>
</dbReference>
<dbReference type="InterPro" id="IPR020568">
    <property type="entry name" value="Ribosomal_Su5_D2-typ_SF"/>
</dbReference>
<dbReference type="InterPro" id="IPR014721">
    <property type="entry name" value="Ribsml_uS5_D2-typ_fold_subgr"/>
</dbReference>
<dbReference type="NCBIfam" id="TIGR00763">
    <property type="entry name" value="lon"/>
    <property type="match status" value="1"/>
</dbReference>
<dbReference type="PANTHER" id="PTHR43718">
    <property type="entry name" value="LON PROTEASE"/>
    <property type="match status" value="1"/>
</dbReference>
<dbReference type="PANTHER" id="PTHR43718:SF2">
    <property type="entry name" value="LON PROTEASE HOMOLOG, MITOCHONDRIAL"/>
    <property type="match status" value="1"/>
</dbReference>
<dbReference type="Pfam" id="PF00004">
    <property type="entry name" value="AAA"/>
    <property type="match status" value="1"/>
</dbReference>
<dbReference type="Pfam" id="PF05362">
    <property type="entry name" value="Lon_C"/>
    <property type="match status" value="1"/>
</dbReference>
<dbReference type="Pfam" id="PF22667">
    <property type="entry name" value="Lon_lid"/>
    <property type="match status" value="1"/>
</dbReference>
<dbReference type="Pfam" id="PF02190">
    <property type="entry name" value="LON_substr_bdg"/>
    <property type="match status" value="1"/>
</dbReference>
<dbReference type="PRINTS" id="PR00830">
    <property type="entry name" value="ENDOLAPTASE"/>
</dbReference>
<dbReference type="SMART" id="SM00382">
    <property type="entry name" value="AAA"/>
    <property type="match status" value="1"/>
</dbReference>
<dbReference type="SMART" id="SM00464">
    <property type="entry name" value="LON"/>
    <property type="match status" value="1"/>
</dbReference>
<dbReference type="SUPFAM" id="SSF52540">
    <property type="entry name" value="P-loop containing nucleoside triphosphate hydrolases"/>
    <property type="match status" value="1"/>
</dbReference>
<dbReference type="SUPFAM" id="SSF88697">
    <property type="entry name" value="PUA domain-like"/>
    <property type="match status" value="1"/>
</dbReference>
<dbReference type="SUPFAM" id="SSF54211">
    <property type="entry name" value="Ribosomal protein S5 domain 2-like"/>
    <property type="match status" value="1"/>
</dbReference>
<dbReference type="PROSITE" id="PS51787">
    <property type="entry name" value="LON_N"/>
    <property type="match status" value="1"/>
</dbReference>
<dbReference type="PROSITE" id="PS51786">
    <property type="entry name" value="LON_PROTEOLYTIC"/>
    <property type="match status" value="1"/>
</dbReference>
<dbReference type="PROSITE" id="PS01046">
    <property type="entry name" value="LON_SER"/>
    <property type="match status" value="1"/>
</dbReference>
<keyword id="KW-0067">ATP-binding</keyword>
<keyword id="KW-0238">DNA-binding</keyword>
<keyword id="KW-0378">Hydrolase</keyword>
<keyword id="KW-0496">Mitochondrion</keyword>
<keyword id="KW-0547">Nucleotide-binding</keyword>
<keyword id="KW-0645">Protease</keyword>
<keyword id="KW-1185">Reference proteome</keyword>
<keyword id="KW-0720">Serine protease</keyword>
<keyword id="KW-0809">Transit peptide</keyword>
<comment type="function">
    <text evidence="1 5">ATP-dependent serine protease that mediates the selective degradation of misfolded, unassembled or oxidatively damaged polypeptides as well as certain short-lived regulatory proteins in the mitochondrial matrix. May also have a chaperone function in the assembly of inner membrane protein complexes. Participates in the regulation of mitochondrial gene expression and in the maintenance of the integrity of the mitochondrial genome. Binds to mitochondrial DNA in a site-specific manner. Involved in the degradation of transcription factor atfs-1 in the mitochondrion (PubMed:22700657).</text>
</comment>
<comment type="catalytic activity">
    <reaction evidence="1">
        <text>Hydrolysis of proteins in presence of ATP.</text>
        <dbReference type="EC" id="3.4.21.53"/>
    </reaction>
</comment>
<comment type="subunit">
    <text evidence="1">Homohexamer or homoheptamer. Organized in a ring with a central cavity.</text>
</comment>
<comment type="subcellular location">
    <subcellularLocation>
        <location evidence="1">Mitochondrion matrix</location>
    </subcellularLocation>
</comment>
<comment type="disruption phenotype">
    <text evidence="5">RNAi-mediated knockdown causes transcription factor atfs-1 accumulation in mitochondria.</text>
</comment>
<comment type="similarity">
    <text evidence="1">Belongs to the peptidase S16 family.</text>
</comment>
<protein>
    <recommendedName>
        <fullName evidence="1">Lon protease homolog, mitochondrial</fullName>
        <ecNumber evidence="1">3.4.21.53</ecNumber>
    </recommendedName>
</protein>
<evidence type="ECO:0000255" key="1">
    <source>
        <dbReference type="HAMAP-Rule" id="MF_03120"/>
    </source>
</evidence>
<evidence type="ECO:0000255" key="2">
    <source>
        <dbReference type="PROSITE-ProRule" id="PRU01122"/>
    </source>
</evidence>
<evidence type="ECO:0000255" key="3">
    <source>
        <dbReference type="PROSITE-ProRule" id="PRU01123"/>
    </source>
</evidence>
<evidence type="ECO:0000256" key="4">
    <source>
        <dbReference type="SAM" id="MobiDB-lite"/>
    </source>
</evidence>
<evidence type="ECO:0000269" key="5">
    <source>
    </source>
</evidence>
<evidence type="ECO:0000312" key="6">
    <source>
        <dbReference type="WormBase" id="C34B2.6"/>
    </source>
</evidence>
<accession>O44952</accession>